<accession>Q9KGE4</accession>
<gene>
    <name type="primary">rplJ</name>
    <name type="ordered locus">BH0121</name>
</gene>
<feature type="chain" id="PRO_0000154585" description="Large ribosomal subunit protein uL10">
    <location>
        <begin position="1"/>
        <end position="165"/>
    </location>
</feature>
<keyword id="KW-1185">Reference proteome</keyword>
<keyword id="KW-0687">Ribonucleoprotein</keyword>
<keyword id="KW-0689">Ribosomal protein</keyword>
<keyword id="KW-0694">RNA-binding</keyword>
<keyword id="KW-0699">rRNA-binding</keyword>
<reference key="1">
    <citation type="journal article" date="2000" name="Nucleic Acids Res.">
        <title>Complete genome sequence of the alkaliphilic bacterium Bacillus halodurans and genomic sequence comparison with Bacillus subtilis.</title>
        <authorList>
            <person name="Takami H."/>
            <person name="Nakasone K."/>
            <person name="Takaki Y."/>
            <person name="Maeno G."/>
            <person name="Sasaki R."/>
            <person name="Masui N."/>
            <person name="Fuji F."/>
            <person name="Hirama C."/>
            <person name="Nakamura Y."/>
            <person name="Ogasawara N."/>
            <person name="Kuhara S."/>
            <person name="Horikoshi K."/>
        </authorList>
    </citation>
    <scope>NUCLEOTIDE SEQUENCE [LARGE SCALE GENOMIC DNA]</scope>
    <source>
        <strain>ATCC BAA-125 / DSM 18197 / FERM 7344 / JCM 9153 / C-125</strain>
    </source>
</reference>
<evidence type="ECO:0000250" key="1"/>
<evidence type="ECO:0000305" key="2"/>
<dbReference type="EMBL" id="BA000004">
    <property type="protein sequence ID" value="BAB03840.1"/>
    <property type="molecule type" value="Genomic_DNA"/>
</dbReference>
<dbReference type="PIR" id="A83665">
    <property type="entry name" value="A83665"/>
</dbReference>
<dbReference type="RefSeq" id="WP_010896304.1">
    <property type="nucleotide sequence ID" value="NC_002570.2"/>
</dbReference>
<dbReference type="SMR" id="Q9KGE4"/>
<dbReference type="STRING" id="272558.gene:10725961"/>
<dbReference type="GeneID" id="87595664"/>
<dbReference type="KEGG" id="bha:BH0121"/>
<dbReference type="eggNOG" id="COG0244">
    <property type="taxonomic scope" value="Bacteria"/>
</dbReference>
<dbReference type="HOGENOM" id="CLU_092227_2_0_9"/>
<dbReference type="OrthoDB" id="9808307at2"/>
<dbReference type="Proteomes" id="UP000001258">
    <property type="component" value="Chromosome"/>
</dbReference>
<dbReference type="GO" id="GO:0015934">
    <property type="term" value="C:large ribosomal subunit"/>
    <property type="evidence" value="ECO:0007669"/>
    <property type="project" value="InterPro"/>
</dbReference>
<dbReference type="GO" id="GO:0070180">
    <property type="term" value="F:large ribosomal subunit rRNA binding"/>
    <property type="evidence" value="ECO:0007669"/>
    <property type="project" value="UniProtKB-UniRule"/>
</dbReference>
<dbReference type="GO" id="GO:0003735">
    <property type="term" value="F:structural constituent of ribosome"/>
    <property type="evidence" value="ECO:0007669"/>
    <property type="project" value="InterPro"/>
</dbReference>
<dbReference type="GO" id="GO:0006412">
    <property type="term" value="P:translation"/>
    <property type="evidence" value="ECO:0007669"/>
    <property type="project" value="UniProtKB-UniRule"/>
</dbReference>
<dbReference type="CDD" id="cd05797">
    <property type="entry name" value="Ribosomal_L10"/>
    <property type="match status" value="1"/>
</dbReference>
<dbReference type="FunFam" id="3.30.70.1730:FF:000001">
    <property type="entry name" value="50S ribosomal protein L10"/>
    <property type="match status" value="1"/>
</dbReference>
<dbReference type="Gene3D" id="3.30.70.1730">
    <property type="match status" value="1"/>
</dbReference>
<dbReference type="Gene3D" id="6.10.250.290">
    <property type="match status" value="1"/>
</dbReference>
<dbReference type="HAMAP" id="MF_00362">
    <property type="entry name" value="Ribosomal_uL10"/>
    <property type="match status" value="1"/>
</dbReference>
<dbReference type="InterPro" id="IPR001790">
    <property type="entry name" value="Ribosomal_uL10"/>
</dbReference>
<dbReference type="InterPro" id="IPR043141">
    <property type="entry name" value="Ribosomal_uL10-like_sf"/>
</dbReference>
<dbReference type="InterPro" id="IPR022973">
    <property type="entry name" value="Ribosomal_uL10_bac"/>
</dbReference>
<dbReference type="InterPro" id="IPR047865">
    <property type="entry name" value="Ribosomal_uL10_bac_type"/>
</dbReference>
<dbReference type="InterPro" id="IPR002363">
    <property type="entry name" value="Ribosomal_uL10_CS_bac"/>
</dbReference>
<dbReference type="NCBIfam" id="NF000955">
    <property type="entry name" value="PRK00099.1-1"/>
    <property type="match status" value="1"/>
</dbReference>
<dbReference type="PANTHER" id="PTHR11560">
    <property type="entry name" value="39S RIBOSOMAL PROTEIN L10, MITOCHONDRIAL"/>
    <property type="match status" value="1"/>
</dbReference>
<dbReference type="Pfam" id="PF00466">
    <property type="entry name" value="Ribosomal_L10"/>
    <property type="match status" value="1"/>
</dbReference>
<dbReference type="SUPFAM" id="SSF160369">
    <property type="entry name" value="Ribosomal protein L10-like"/>
    <property type="match status" value="1"/>
</dbReference>
<dbReference type="PROSITE" id="PS01109">
    <property type="entry name" value="RIBOSOMAL_L10"/>
    <property type="match status" value="1"/>
</dbReference>
<protein>
    <recommendedName>
        <fullName evidence="2">Large ribosomal subunit protein uL10</fullName>
    </recommendedName>
    <alternativeName>
        <fullName>50S ribosomal protein L10</fullName>
    </alternativeName>
</protein>
<sequence length="165" mass="17974">MSVLEQKKQIVTEIATKLKESQSTVVVDYRGLNVAEVTELRKQLREAGCEFKVYKNTMTRRAAEVAELTELNDVLVGPTAIAFHNEDAIAPAKIINSFAKEHEALEIKAGVIEGNVASVEEVKALAELPSREGLLSMLLSVLQAPVRNFALATKAVADQKEEQGA</sequence>
<organism>
    <name type="scientific">Halalkalibacterium halodurans (strain ATCC BAA-125 / DSM 18197 / FERM 7344 / JCM 9153 / C-125)</name>
    <name type="common">Bacillus halodurans</name>
    <dbReference type="NCBI Taxonomy" id="272558"/>
    <lineage>
        <taxon>Bacteria</taxon>
        <taxon>Bacillati</taxon>
        <taxon>Bacillota</taxon>
        <taxon>Bacilli</taxon>
        <taxon>Bacillales</taxon>
        <taxon>Bacillaceae</taxon>
        <taxon>Halalkalibacterium (ex Joshi et al. 2022)</taxon>
    </lineage>
</organism>
<name>RL10_HALH5</name>
<proteinExistence type="inferred from homology"/>
<comment type="function">
    <text evidence="1">Forms part of the ribosomal stalk, playing a central role in the interaction of the ribosome with GTP-bound translation factors.</text>
</comment>
<comment type="subunit">
    <text evidence="1">Part of the ribosomal stalk of the 50S ribosomal subunit. The N-terminus interacts with L11 and the large rRNA to form the base of the stalk. The C-terminus forms an elongated spine to which L12 dimers bind in a sequential fashion forming a multimeric L10(L12)X complex (By similarity).</text>
</comment>
<comment type="similarity">
    <text evidence="2">Belongs to the universal ribosomal protein uL10 family.</text>
</comment>